<sequence length="312" mass="35325">MLTELALGLFALWIAIFSQALHKIEEGHVGVYYRGGALLKAVTNPGYHMHIPFLTTVKSVQVTLQTDEATNVPCGTSGGVLIYFDRIEVVNFLSQDSVYAIVKNYTVDYDRPLIFNKVHHEVNQFCSVHTLQEVYIDLFDKIDEEIKNALQEDLVKMAPGLYVQAVRVTKPKIPEAIRLNYEKMEAEKTKLLVAQETQKVVEKLAETERKKAVIEAEKAAQVALIHQKRLLSEKETEKLLNQMEAESNLASERSKADAEFYKAQKQADSNKILLTKEYLELQKIRAIASNNKIYYGDSIPQAFVMGTTQQTV</sequence>
<keyword id="KW-0256">Endoplasmic reticulum</keyword>
<keyword id="KW-0325">Glycoprotein</keyword>
<keyword id="KW-0472">Membrane</keyword>
<keyword id="KW-1185">Reference proteome</keyword>
<keyword id="KW-0735">Signal-anchor</keyword>
<keyword id="KW-0812">Transmembrane</keyword>
<keyword id="KW-1133">Transmembrane helix</keyword>
<protein>
    <recommendedName>
        <fullName evidence="5">Erlin</fullName>
    </recommendedName>
    <alternativeName>
        <fullName evidence="5">Endoplasmic reticulum lipid raft-associated protein 1</fullName>
    </alternativeName>
</protein>
<reference evidence="8" key="1">
    <citation type="journal article" date="1998" name="Science">
        <title>Genome sequence of the nematode C. elegans: a platform for investigating biology.</title>
        <authorList>
            <consortium name="The C. elegans sequencing consortium"/>
        </authorList>
    </citation>
    <scope>NUCLEOTIDE SEQUENCE [LARGE SCALE GENOMIC DNA]</scope>
    <source>
        <strain evidence="8">Bristol N2</strain>
    </source>
</reference>
<reference evidence="6" key="2">
    <citation type="journal article" date="2012" name="BMC Cell Biol.">
        <title>Characterization of the C. elegans erlin homologue.</title>
        <authorList>
            <person name="Hoegg M.B."/>
            <person name="Robbins S.M."/>
            <person name="McGhee J.D."/>
        </authorList>
    </citation>
    <scope>SUBUNIT</scope>
    <scope>SUBCELLULAR LOCATION</scope>
    <scope>TISSUE SPECIFICITY</scope>
    <scope>DEVELOPMENTAL STAGE</scope>
    <scope>DISRUPTION PHENOTYPE</scope>
    <scope>MUTAGENESIS OF PHE-303</scope>
</reference>
<dbReference type="EMBL" id="BX284604">
    <property type="protein sequence ID" value="CAM36358.1"/>
    <property type="molecule type" value="Genomic_DNA"/>
</dbReference>
<dbReference type="RefSeq" id="NP_502339.1">
    <property type="nucleotide sequence ID" value="NM_069938.5"/>
</dbReference>
<dbReference type="SMR" id="A3QMC6"/>
<dbReference type="FunCoup" id="A3QMC6">
    <property type="interactions" value="1966"/>
</dbReference>
<dbReference type="STRING" id="6239.C42C1.15.1"/>
<dbReference type="GlyCosmos" id="A3QMC6">
    <property type="glycosylation" value="1 site, No reported glycans"/>
</dbReference>
<dbReference type="PaxDb" id="6239-C42C1.15"/>
<dbReference type="PeptideAtlas" id="A3QMC6"/>
<dbReference type="EnsemblMetazoa" id="C42C1.15.1">
    <property type="protein sequence ID" value="C42C1.15.1"/>
    <property type="gene ID" value="WBGene00016592"/>
</dbReference>
<dbReference type="GeneID" id="178178"/>
<dbReference type="KEGG" id="cel:CELE_C42C1.15"/>
<dbReference type="UCSC" id="C42C1.15">
    <property type="organism name" value="c. elegans"/>
</dbReference>
<dbReference type="AGR" id="WB:WBGene00016592"/>
<dbReference type="CTD" id="178178"/>
<dbReference type="WormBase" id="C42C1.15">
    <property type="protein sequence ID" value="CE26912"/>
    <property type="gene ID" value="WBGene00016592"/>
    <property type="gene designation" value="erl-1"/>
</dbReference>
<dbReference type="eggNOG" id="KOG2962">
    <property type="taxonomic scope" value="Eukaryota"/>
</dbReference>
<dbReference type="GeneTree" id="ENSGT00390000014666"/>
<dbReference type="HOGENOM" id="CLU_058701_0_0_1"/>
<dbReference type="InParanoid" id="A3QMC6"/>
<dbReference type="OMA" id="YNMVRNF"/>
<dbReference type="OrthoDB" id="77368at2759"/>
<dbReference type="PhylomeDB" id="A3QMC6"/>
<dbReference type="Reactome" id="R-CEL-382556">
    <property type="pathway name" value="ABC-family proteins mediated transport"/>
</dbReference>
<dbReference type="PRO" id="PR:A3QMC6"/>
<dbReference type="Proteomes" id="UP000001940">
    <property type="component" value="Chromosome IV"/>
</dbReference>
<dbReference type="Bgee" id="WBGene00016592">
    <property type="expression patterns" value="Expressed in adult organism and 3 other cell types or tissues"/>
</dbReference>
<dbReference type="GO" id="GO:0005789">
    <property type="term" value="C:endoplasmic reticulum membrane"/>
    <property type="evidence" value="ECO:0000314"/>
    <property type="project" value="UniProtKB"/>
</dbReference>
<dbReference type="GO" id="GO:0032991">
    <property type="term" value="C:protein-containing complex"/>
    <property type="evidence" value="ECO:0000315"/>
    <property type="project" value="UniProtKB"/>
</dbReference>
<dbReference type="GO" id="GO:0015485">
    <property type="term" value="F:cholesterol binding"/>
    <property type="evidence" value="ECO:0000318"/>
    <property type="project" value="GO_Central"/>
</dbReference>
<dbReference type="GO" id="GO:0031625">
    <property type="term" value="F:ubiquitin protein ligase binding"/>
    <property type="evidence" value="ECO:0007669"/>
    <property type="project" value="InterPro"/>
</dbReference>
<dbReference type="GO" id="GO:0032933">
    <property type="term" value="P:SREBP signaling pathway"/>
    <property type="evidence" value="ECO:0000318"/>
    <property type="project" value="GO_Central"/>
</dbReference>
<dbReference type="CDD" id="cd03406">
    <property type="entry name" value="SPFH_like_u3"/>
    <property type="match status" value="1"/>
</dbReference>
<dbReference type="FunFam" id="3.30.479.30:FF:000009">
    <property type="entry name" value="Erlin-2 isoform 1"/>
    <property type="match status" value="1"/>
</dbReference>
<dbReference type="Gene3D" id="3.30.479.30">
    <property type="entry name" value="Band 7 domain"/>
    <property type="match status" value="1"/>
</dbReference>
<dbReference type="InterPro" id="IPR001107">
    <property type="entry name" value="Band_7"/>
</dbReference>
<dbReference type="InterPro" id="IPR036013">
    <property type="entry name" value="Band_7/SPFH_dom_sf"/>
</dbReference>
<dbReference type="InterPro" id="IPR033294">
    <property type="entry name" value="Erlin1/2"/>
</dbReference>
<dbReference type="PANTHER" id="PTHR15351:SF3">
    <property type="entry name" value="ERLIN"/>
    <property type="match status" value="1"/>
</dbReference>
<dbReference type="PANTHER" id="PTHR15351">
    <property type="entry name" value="ERLIN (ER LIPID RAFT ASSOCIATED PROTEIN) HOMOLOG"/>
    <property type="match status" value="1"/>
</dbReference>
<dbReference type="Pfam" id="PF01145">
    <property type="entry name" value="Band_7"/>
    <property type="match status" value="1"/>
</dbReference>
<dbReference type="SMART" id="SM00244">
    <property type="entry name" value="PHB"/>
    <property type="match status" value="1"/>
</dbReference>
<dbReference type="SUPFAM" id="SSF117892">
    <property type="entry name" value="Band 7/SPFH domain"/>
    <property type="match status" value="1"/>
</dbReference>
<organism evidence="8">
    <name type="scientific">Caenorhabditis elegans</name>
    <dbReference type="NCBI Taxonomy" id="6239"/>
    <lineage>
        <taxon>Eukaryota</taxon>
        <taxon>Metazoa</taxon>
        <taxon>Ecdysozoa</taxon>
        <taxon>Nematoda</taxon>
        <taxon>Chromadorea</taxon>
        <taxon>Rhabditida</taxon>
        <taxon>Rhabditina</taxon>
        <taxon>Rhabditomorpha</taxon>
        <taxon>Rhabditoidea</taxon>
        <taxon>Rhabditidae</taxon>
        <taxon>Peloderinae</taxon>
        <taxon>Caenorhabditis</taxon>
    </lineage>
</organism>
<gene>
    <name evidence="5 9" type="primary">erl-1</name>
    <name evidence="9" type="ORF">C42C1.15</name>
</gene>
<feature type="chain" id="PRO_5002658006" description="Erlin">
    <location>
        <begin position="1"/>
        <end position="312"/>
    </location>
</feature>
<feature type="topological domain" description="Cytoplasmic" evidence="6">
    <location>
        <begin position="1"/>
        <end position="3"/>
    </location>
</feature>
<feature type="transmembrane region" description="Helical" evidence="2">
    <location>
        <begin position="4"/>
        <end position="24"/>
    </location>
</feature>
<feature type="topological domain" description="Lumenal" evidence="6">
    <location>
        <begin position="25"/>
        <end position="312"/>
    </location>
</feature>
<feature type="glycosylation site" description="N-linked (GlcNAc...) asparagine" evidence="3">
    <location>
        <position position="104"/>
    </location>
</feature>
<feature type="mutagenesis site" description="Fails to form multimeric complexes." evidence="7">
    <original>F</original>
    <variation>A</variation>
    <location>
        <position position="303"/>
    </location>
</feature>
<evidence type="ECO:0000250" key="1">
    <source>
        <dbReference type="UniProtKB" id="O75477"/>
    </source>
</evidence>
<evidence type="ECO:0000255" key="2"/>
<evidence type="ECO:0000255" key="3">
    <source>
        <dbReference type="PROSITE-ProRule" id="PRU00498"/>
    </source>
</evidence>
<evidence type="ECO:0000269" key="4">
    <source>
    </source>
</evidence>
<evidence type="ECO:0000303" key="5">
    <source>
    </source>
</evidence>
<evidence type="ECO:0000305" key="6"/>
<evidence type="ECO:0000305" key="7">
    <source>
    </source>
</evidence>
<evidence type="ECO:0000312" key="8">
    <source>
        <dbReference type="Proteomes" id="UP000001940"/>
    </source>
</evidence>
<evidence type="ECO:0000312" key="9">
    <source>
        <dbReference type="WormBase" id="C42C1.15"/>
    </source>
</evidence>
<comment type="subunit">
    <text evidence="4">Seems to form a multimeric complex.</text>
</comment>
<comment type="subcellular location">
    <subcellularLocation>
        <location evidence="4">Endoplasmic reticulum membrane</location>
        <topology evidence="1">Single-pass type II membrane protein</topology>
    </subcellularLocation>
</comment>
<comment type="tissue specificity">
    <text evidence="4">Expressed in the germline only.</text>
</comment>
<comment type="developmental stage">
    <text evidence="4">Expressed throughout development (at protein level) (PubMed:22269071). Highly expressed in embryos and L1 stage larvae (at protein level) (PubMed:22269071).</text>
</comment>
<comment type="disruption phenotype">
    <text evidence="4">No visible phenotype, with no change in growth rate at 20 or 26 degrees Celsius, general morphology or lifespan compared to wild-type (PubMed:22269071). Does not affect brood size, embryonic development or defecation rates of itr-1 (sa73) mutants (PubMed:22269071). No change in development or survival compared to wild-type animals following exposure to ER stress inducing agents such as tunicamycin and dithiothreitol (PubMed:22269071).</text>
</comment>
<comment type="similarity">
    <text evidence="6">Belongs to the band 7/mec-2 family.</text>
</comment>
<comment type="caution">
    <text evidence="4">Unlike mammalian homologs, does not play an essential role in the endoplasmic reticulum-associated degradation (ERAD) of inositol 1,4,5-triphosphate receptors (IP3Rs).</text>
</comment>
<proteinExistence type="evidence at protein level"/>
<name>ERLN_CAEEL</name>
<accession>A3QMC6</accession>